<proteinExistence type="inferred from homology"/>
<evidence type="ECO:0000255" key="1">
    <source>
        <dbReference type="HAMAP-Rule" id="MF_00313"/>
    </source>
</evidence>
<gene>
    <name evidence="1" type="primary">glsA</name>
    <name type="ordered locus">ASA_0837</name>
</gene>
<feature type="chain" id="PRO_1000048320" description="Glutaminase">
    <location>
        <begin position="1"/>
        <end position="306"/>
    </location>
</feature>
<feature type="binding site" evidence="1">
    <location>
        <position position="64"/>
    </location>
    <ligand>
        <name>substrate</name>
    </ligand>
</feature>
<feature type="binding site" evidence="1">
    <location>
        <position position="115"/>
    </location>
    <ligand>
        <name>substrate</name>
    </ligand>
</feature>
<feature type="binding site" evidence="1">
    <location>
        <position position="159"/>
    </location>
    <ligand>
        <name>substrate</name>
    </ligand>
</feature>
<feature type="binding site" evidence="1">
    <location>
        <position position="166"/>
    </location>
    <ligand>
        <name>substrate</name>
    </ligand>
</feature>
<feature type="binding site" evidence="1">
    <location>
        <position position="190"/>
    </location>
    <ligand>
        <name>substrate</name>
    </ligand>
</feature>
<feature type="binding site" evidence="1">
    <location>
        <position position="242"/>
    </location>
    <ligand>
        <name>substrate</name>
    </ligand>
</feature>
<feature type="binding site" evidence="1">
    <location>
        <position position="260"/>
    </location>
    <ligand>
        <name>substrate</name>
    </ligand>
</feature>
<reference key="1">
    <citation type="journal article" date="2008" name="BMC Genomics">
        <title>The genome of Aeromonas salmonicida subsp. salmonicida A449: insights into the evolution of a fish pathogen.</title>
        <authorList>
            <person name="Reith M.E."/>
            <person name="Singh R.K."/>
            <person name="Curtis B."/>
            <person name="Boyd J.M."/>
            <person name="Bouevitch A."/>
            <person name="Kimball J."/>
            <person name="Munholland J."/>
            <person name="Murphy C."/>
            <person name="Sarty D."/>
            <person name="Williams J."/>
            <person name="Nash J.H."/>
            <person name="Johnson S.C."/>
            <person name="Brown L.L."/>
        </authorList>
    </citation>
    <scope>NUCLEOTIDE SEQUENCE [LARGE SCALE GENOMIC DNA]</scope>
    <source>
        <strain>A449</strain>
    </source>
</reference>
<keyword id="KW-0378">Hydrolase</keyword>
<organism>
    <name type="scientific">Aeromonas salmonicida (strain A449)</name>
    <dbReference type="NCBI Taxonomy" id="382245"/>
    <lineage>
        <taxon>Bacteria</taxon>
        <taxon>Pseudomonadati</taxon>
        <taxon>Pseudomonadota</taxon>
        <taxon>Gammaproteobacteria</taxon>
        <taxon>Aeromonadales</taxon>
        <taxon>Aeromonadaceae</taxon>
        <taxon>Aeromonas</taxon>
    </lineage>
</organism>
<sequence length="306" mass="32824">MVLSSELLASILAEVRPLLGQGKVADYIPALAQVPADRLGMAVCTVEGELFTAGDAFEPFSIQSISKALSLTLALTLYQEEEIWARVGKEPSGQPFNSLVQLEFEQGIPRNPFINAGALVVSDLLETRLTAPRQRTLELVRRLSGNPAIMADQVVARSEYQHSARNAAIAYLMKAYGNFENEVDKVLQSYFNACAIRMSCVDLARAFIYLANRGVPLGAGEPLLPARTTKQVNALLATCGLYDEAGDFAYRVGMPGKSGVGGGIMALIPGELCVCVWSPELNKAGNSLAGTAALELLAERLGRSIF</sequence>
<protein>
    <recommendedName>
        <fullName evidence="1">Glutaminase</fullName>
        <ecNumber evidence="1">3.5.1.2</ecNumber>
    </recommendedName>
</protein>
<accession>A4SJB3</accession>
<name>GLSA_AERS4</name>
<comment type="catalytic activity">
    <reaction evidence="1">
        <text>L-glutamine + H2O = L-glutamate + NH4(+)</text>
        <dbReference type="Rhea" id="RHEA:15889"/>
        <dbReference type="ChEBI" id="CHEBI:15377"/>
        <dbReference type="ChEBI" id="CHEBI:28938"/>
        <dbReference type="ChEBI" id="CHEBI:29985"/>
        <dbReference type="ChEBI" id="CHEBI:58359"/>
        <dbReference type="EC" id="3.5.1.2"/>
    </reaction>
</comment>
<comment type="subunit">
    <text evidence="1">Homotetramer.</text>
</comment>
<comment type="similarity">
    <text evidence="1">Belongs to the glutaminase family.</text>
</comment>
<dbReference type="EC" id="3.5.1.2" evidence="1"/>
<dbReference type="EMBL" id="CP000644">
    <property type="protein sequence ID" value="ABO88985.1"/>
    <property type="molecule type" value="Genomic_DNA"/>
</dbReference>
<dbReference type="SMR" id="A4SJB3"/>
<dbReference type="STRING" id="29491.GCA_000820065_02313"/>
<dbReference type="KEGG" id="asa:ASA_0837"/>
<dbReference type="eggNOG" id="COG2066">
    <property type="taxonomic scope" value="Bacteria"/>
</dbReference>
<dbReference type="HOGENOM" id="CLU_027932_1_1_6"/>
<dbReference type="Proteomes" id="UP000000225">
    <property type="component" value="Chromosome"/>
</dbReference>
<dbReference type="GO" id="GO:0004359">
    <property type="term" value="F:glutaminase activity"/>
    <property type="evidence" value="ECO:0007669"/>
    <property type="project" value="UniProtKB-UniRule"/>
</dbReference>
<dbReference type="GO" id="GO:0006537">
    <property type="term" value="P:glutamate biosynthetic process"/>
    <property type="evidence" value="ECO:0007669"/>
    <property type="project" value="TreeGrafter"/>
</dbReference>
<dbReference type="GO" id="GO:0006543">
    <property type="term" value="P:glutamine catabolic process"/>
    <property type="evidence" value="ECO:0007669"/>
    <property type="project" value="TreeGrafter"/>
</dbReference>
<dbReference type="FunFam" id="3.40.710.10:FF:000005">
    <property type="entry name" value="Glutaminase"/>
    <property type="match status" value="1"/>
</dbReference>
<dbReference type="Gene3D" id="3.40.710.10">
    <property type="entry name" value="DD-peptidase/beta-lactamase superfamily"/>
    <property type="match status" value="1"/>
</dbReference>
<dbReference type="HAMAP" id="MF_00313">
    <property type="entry name" value="Glutaminase"/>
    <property type="match status" value="1"/>
</dbReference>
<dbReference type="InterPro" id="IPR012338">
    <property type="entry name" value="Beta-lactam/transpept-like"/>
</dbReference>
<dbReference type="InterPro" id="IPR015868">
    <property type="entry name" value="Glutaminase"/>
</dbReference>
<dbReference type="NCBIfam" id="TIGR03814">
    <property type="entry name" value="Gln_ase"/>
    <property type="match status" value="1"/>
</dbReference>
<dbReference type="NCBIfam" id="NF002132">
    <property type="entry name" value="PRK00971.1-1"/>
    <property type="match status" value="1"/>
</dbReference>
<dbReference type="NCBIfam" id="NF002133">
    <property type="entry name" value="PRK00971.1-2"/>
    <property type="match status" value="1"/>
</dbReference>
<dbReference type="PANTHER" id="PTHR12544">
    <property type="entry name" value="GLUTAMINASE"/>
    <property type="match status" value="1"/>
</dbReference>
<dbReference type="PANTHER" id="PTHR12544:SF29">
    <property type="entry name" value="GLUTAMINASE"/>
    <property type="match status" value="1"/>
</dbReference>
<dbReference type="Pfam" id="PF04960">
    <property type="entry name" value="Glutaminase"/>
    <property type="match status" value="1"/>
</dbReference>
<dbReference type="SUPFAM" id="SSF56601">
    <property type="entry name" value="beta-lactamase/transpeptidase-like"/>
    <property type="match status" value="1"/>
</dbReference>